<reference key="1">
    <citation type="journal article" date="2000" name="Nucleic Acids Res.">
        <title>Complete genome sequence of the alkaliphilic bacterium Bacillus halodurans and genomic sequence comparison with Bacillus subtilis.</title>
        <authorList>
            <person name="Takami H."/>
            <person name="Nakasone K."/>
            <person name="Takaki Y."/>
            <person name="Maeno G."/>
            <person name="Sasaki R."/>
            <person name="Masui N."/>
            <person name="Fuji F."/>
            <person name="Hirama C."/>
            <person name="Nakamura Y."/>
            <person name="Ogasawara N."/>
            <person name="Kuhara S."/>
            <person name="Horikoshi K."/>
        </authorList>
    </citation>
    <scope>NUCLEOTIDE SEQUENCE [LARGE SCALE GENOMIC DNA]</scope>
    <source>
        <strain>ATCC BAA-125 / DSM 18197 / FERM 7344 / JCM 9153 / C-125</strain>
    </source>
</reference>
<protein>
    <recommendedName>
        <fullName evidence="1">Ribonuclease Y</fullName>
        <shortName evidence="1">RNase Y</shortName>
        <ecNumber evidence="1">3.1.-.-</ecNumber>
    </recommendedName>
</protein>
<organism>
    <name type="scientific">Halalkalibacterium halodurans (strain ATCC BAA-125 / DSM 18197 / FERM 7344 / JCM 9153 / C-125)</name>
    <name type="common">Bacillus halodurans</name>
    <dbReference type="NCBI Taxonomy" id="272558"/>
    <lineage>
        <taxon>Bacteria</taxon>
        <taxon>Bacillati</taxon>
        <taxon>Bacillota</taxon>
        <taxon>Bacilli</taxon>
        <taxon>Bacillales</taxon>
        <taxon>Bacillaceae</taxon>
        <taxon>Halalkalibacterium (ex Joshi et al. 2022)</taxon>
    </lineage>
</organism>
<feature type="chain" id="PRO_0000163764" description="Ribonuclease Y">
    <location>
        <begin position="1"/>
        <end position="521"/>
    </location>
</feature>
<feature type="transmembrane region" description="Helical" evidence="1">
    <location>
        <begin position="5"/>
        <end position="25"/>
    </location>
</feature>
<feature type="domain" description="KH" evidence="1">
    <location>
        <begin position="211"/>
        <end position="274"/>
    </location>
</feature>
<feature type="domain" description="HD" evidence="2">
    <location>
        <begin position="337"/>
        <end position="430"/>
    </location>
</feature>
<feature type="region of interest" description="Disordered" evidence="3">
    <location>
        <begin position="105"/>
        <end position="124"/>
    </location>
</feature>
<accession>Q9KAB2</accession>
<comment type="function">
    <text evidence="1">Endoribonuclease that initiates mRNA decay.</text>
</comment>
<comment type="subcellular location">
    <subcellularLocation>
        <location evidence="1">Cell membrane</location>
        <topology evidence="1">Single-pass membrane protein</topology>
    </subcellularLocation>
</comment>
<comment type="similarity">
    <text evidence="1">Belongs to the RNase Y family.</text>
</comment>
<sequence>MEFNVLFISILLVVSAVSAVVGYLVRKSIAEAKISSAEHAAKQIVEDAKREAEAGKKEAILEVKDEVHKLRTEAEREIRERRNEIQKQENRLVQKEEILDRKSETLDKKEESLDKREESLTKKQRQIEEMDSKVEEILNKQQVELERISGFSREEAREVIRAEVEQEMAHETALLIKERVAKAKEEADKKAREILSLAIQRCSADHVAETTVSVVNLPNDEMKGRIIGREGRNIRALETLTGIDLIIDDTPEAVILSGFDPIRREIARTALEKLVQDGRIHPARIEEMVDKARREVDEAIREYGEQTTFEMGIHGLHPDLIKILGRLKFRTSYGQNVLKHSMEVAYLAGLMAAELGEDVKLARRAGLLHDIGKAIDHEVEGSHVEIGVELATKYKEHPVVINAIASHHGDTEATSIISSLVAAADALSAARPGARRETLETYIRRLEKLEEISESFDGVEKTYAIQAGREVRIMVKPDIVDDVLAHKLARDITKKIEEELDYPGHIRVTVIRETRAVEYAK</sequence>
<keyword id="KW-1003">Cell membrane</keyword>
<keyword id="KW-0255">Endonuclease</keyword>
<keyword id="KW-0378">Hydrolase</keyword>
<keyword id="KW-0472">Membrane</keyword>
<keyword id="KW-0540">Nuclease</keyword>
<keyword id="KW-1185">Reference proteome</keyword>
<keyword id="KW-0694">RNA-binding</keyword>
<keyword id="KW-0812">Transmembrane</keyword>
<keyword id="KW-1133">Transmembrane helix</keyword>
<name>RNY_HALH5</name>
<evidence type="ECO:0000255" key="1">
    <source>
        <dbReference type="HAMAP-Rule" id="MF_00335"/>
    </source>
</evidence>
<evidence type="ECO:0000255" key="2">
    <source>
        <dbReference type="PROSITE-ProRule" id="PRU01175"/>
    </source>
</evidence>
<evidence type="ECO:0000256" key="3">
    <source>
        <dbReference type="SAM" id="MobiDB-lite"/>
    </source>
</evidence>
<proteinExistence type="inferred from homology"/>
<dbReference type="EC" id="3.1.-.-" evidence="1"/>
<dbReference type="EMBL" id="BA000004">
    <property type="protein sequence ID" value="BAB06097.1"/>
    <property type="molecule type" value="Genomic_DNA"/>
</dbReference>
<dbReference type="PIR" id="B83947">
    <property type="entry name" value="B83947"/>
</dbReference>
<dbReference type="RefSeq" id="WP_010898531.1">
    <property type="nucleotide sequence ID" value="NC_002570.2"/>
</dbReference>
<dbReference type="SMR" id="Q9KAB2"/>
<dbReference type="STRING" id="272558.gene:10728276"/>
<dbReference type="KEGG" id="bha:BH2378"/>
<dbReference type="eggNOG" id="COG1418">
    <property type="taxonomic scope" value="Bacteria"/>
</dbReference>
<dbReference type="HOGENOM" id="CLU_028328_1_0_9"/>
<dbReference type="OrthoDB" id="9803205at2"/>
<dbReference type="Proteomes" id="UP000001258">
    <property type="component" value="Chromosome"/>
</dbReference>
<dbReference type="GO" id="GO:0005886">
    <property type="term" value="C:plasma membrane"/>
    <property type="evidence" value="ECO:0007669"/>
    <property type="project" value="UniProtKB-SubCell"/>
</dbReference>
<dbReference type="GO" id="GO:0003723">
    <property type="term" value="F:RNA binding"/>
    <property type="evidence" value="ECO:0007669"/>
    <property type="project" value="UniProtKB-UniRule"/>
</dbReference>
<dbReference type="GO" id="GO:0004521">
    <property type="term" value="F:RNA endonuclease activity"/>
    <property type="evidence" value="ECO:0007669"/>
    <property type="project" value="UniProtKB-UniRule"/>
</dbReference>
<dbReference type="GO" id="GO:0006402">
    <property type="term" value="P:mRNA catabolic process"/>
    <property type="evidence" value="ECO:0007669"/>
    <property type="project" value="UniProtKB-UniRule"/>
</dbReference>
<dbReference type="CDD" id="cd00077">
    <property type="entry name" value="HDc"/>
    <property type="match status" value="1"/>
</dbReference>
<dbReference type="CDD" id="cd22431">
    <property type="entry name" value="KH-I_RNaseY"/>
    <property type="match status" value="1"/>
</dbReference>
<dbReference type="FunFam" id="1.10.3210.10:FF:000003">
    <property type="entry name" value="Ribonuclease Y"/>
    <property type="match status" value="1"/>
</dbReference>
<dbReference type="FunFam" id="3.30.1370.10:FF:000006">
    <property type="entry name" value="Ribonuclease Y"/>
    <property type="match status" value="1"/>
</dbReference>
<dbReference type="Gene3D" id="1.10.3210.10">
    <property type="entry name" value="Hypothetical protein af1432"/>
    <property type="match status" value="1"/>
</dbReference>
<dbReference type="Gene3D" id="3.30.1370.10">
    <property type="entry name" value="K Homology domain, type 1"/>
    <property type="match status" value="1"/>
</dbReference>
<dbReference type="HAMAP" id="MF_00335">
    <property type="entry name" value="RNase_Y"/>
    <property type="match status" value="1"/>
</dbReference>
<dbReference type="InterPro" id="IPR003607">
    <property type="entry name" value="HD/PDEase_dom"/>
</dbReference>
<dbReference type="InterPro" id="IPR006674">
    <property type="entry name" value="HD_domain"/>
</dbReference>
<dbReference type="InterPro" id="IPR006675">
    <property type="entry name" value="HDIG_dom"/>
</dbReference>
<dbReference type="InterPro" id="IPR004087">
    <property type="entry name" value="KH_dom"/>
</dbReference>
<dbReference type="InterPro" id="IPR004088">
    <property type="entry name" value="KH_dom_type_1"/>
</dbReference>
<dbReference type="InterPro" id="IPR036612">
    <property type="entry name" value="KH_dom_type_1_sf"/>
</dbReference>
<dbReference type="InterPro" id="IPR017705">
    <property type="entry name" value="Ribonuclease_Y"/>
</dbReference>
<dbReference type="InterPro" id="IPR022711">
    <property type="entry name" value="RNase_Y_N"/>
</dbReference>
<dbReference type="NCBIfam" id="TIGR00277">
    <property type="entry name" value="HDIG"/>
    <property type="match status" value="1"/>
</dbReference>
<dbReference type="NCBIfam" id="TIGR03319">
    <property type="entry name" value="RNase_Y"/>
    <property type="match status" value="1"/>
</dbReference>
<dbReference type="PANTHER" id="PTHR12826">
    <property type="entry name" value="RIBONUCLEASE Y"/>
    <property type="match status" value="1"/>
</dbReference>
<dbReference type="PANTHER" id="PTHR12826:SF15">
    <property type="entry name" value="RIBONUCLEASE Y"/>
    <property type="match status" value="1"/>
</dbReference>
<dbReference type="Pfam" id="PF01966">
    <property type="entry name" value="HD"/>
    <property type="match status" value="1"/>
</dbReference>
<dbReference type="Pfam" id="PF00013">
    <property type="entry name" value="KH_1"/>
    <property type="match status" value="1"/>
</dbReference>
<dbReference type="Pfam" id="PF12072">
    <property type="entry name" value="RNase_Y_N"/>
    <property type="match status" value="1"/>
</dbReference>
<dbReference type="SMART" id="SM00471">
    <property type="entry name" value="HDc"/>
    <property type="match status" value="1"/>
</dbReference>
<dbReference type="SMART" id="SM00322">
    <property type="entry name" value="KH"/>
    <property type="match status" value="1"/>
</dbReference>
<dbReference type="SUPFAM" id="SSF54791">
    <property type="entry name" value="Eukaryotic type KH-domain (KH-domain type I)"/>
    <property type="match status" value="1"/>
</dbReference>
<dbReference type="SUPFAM" id="SSF109604">
    <property type="entry name" value="HD-domain/PDEase-like"/>
    <property type="match status" value="1"/>
</dbReference>
<dbReference type="PROSITE" id="PS51831">
    <property type="entry name" value="HD"/>
    <property type="match status" value="1"/>
</dbReference>
<dbReference type="PROSITE" id="PS50084">
    <property type="entry name" value="KH_TYPE_1"/>
    <property type="match status" value="1"/>
</dbReference>
<gene>
    <name evidence="1" type="primary">rny</name>
    <name type="ordered locus">BH2378</name>
</gene>